<keyword id="KW-0963">Cytoplasm</keyword>
<keyword id="KW-0227">DNA damage</keyword>
<keyword id="KW-0228">DNA excision</keyword>
<keyword id="KW-0234">DNA repair</keyword>
<keyword id="KW-0267">Excision nuclease</keyword>
<keyword id="KW-1185">Reference proteome</keyword>
<keyword id="KW-0742">SOS response</keyword>
<organism>
    <name type="scientific">Neisseria meningitidis serogroup B (strain ATCC BAA-335 / MC58)</name>
    <dbReference type="NCBI Taxonomy" id="122586"/>
    <lineage>
        <taxon>Bacteria</taxon>
        <taxon>Pseudomonadati</taxon>
        <taxon>Pseudomonadota</taxon>
        <taxon>Betaproteobacteria</taxon>
        <taxon>Neisseriales</taxon>
        <taxon>Neisseriaceae</taxon>
        <taxon>Neisseria</taxon>
    </lineage>
</organism>
<sequence>MNKETRFPEHFDIPLFLKNLPNLPGVYRFFNESGNVLYVGKAVNLKRRVSGYFQKNDHSPRIALMVKQVHHIETTITRSESEALILENNFIKALSPKYNILFRDDKSYPYLMLSGHQYPQMAYYRGTLKKPNQYFGPYPNSNAVRDSIQVLQKVFMLRTCEDSVFEHRDRPCLLYQIKRCTAPCVGHISEEDYRDSVREAATFLNGKTDELTRTLQHKMQTAAANLQFEEAARYRDQIQALGIMQSNQFIDSKNPNNPNDIDLLALAVSDGLVCVHWVSIRGGRHVGDKSFFPDTKNDPEPNGQDYAEAFVAQHYLGKSKPDIIISNFPVPDALKEALEGEHGKQMQFVTKTIGERKVRLKMAEQNAQMAIAQRRLQQSSQQHRIDELAKILGMDSDGLNRLECFDISHTQGEATIASCVVYDEQNIQPSQYRRYNITTAKPGDDYAAMREVLTRRYGKMQEAEANGETVKWPDAVLIDGGKGQIGVAVSVWEELGLHIPLVGIAKGPERKAGMEELILPFTGEVFRLPPNSPALHLLQTVRDESHRFAITGHRKKRDKARVTSSLSDIPGVGSKRRQALLTRFGGLRGVIAASREDLEKVEGISKALAETIYNHLH</sequence>
<feature type="chain" id="PRO_0000138323" description="UvrABC system protein C">
    <location>
        <begin position="1"/>
        <end position="617"/>
    </location>
</feature>
<feature type="domain" description="GIY-YIG" evidence="1">
    <location>
        <begin position="22"/>
        <end position="100"/>
    </location>
</feature>
<feature type="domain" description="UVR" evidence="1">
    <location>
        <begin position="209"/>
        <end position="244"/>
    </location>
</feature>
<dbReference type="EMBL" id="AE002098">
    <property type="protein sequence ID" value="AAF41701.1"/>
    <property type="molecule type" value="Genomic_DNA"/>
</dbReference>
<dbReference type="PIR" id="A81095">
    <property type="entry name" value="A81095"/>
</dbReference>
<dbReference type="RefSeq" id="NP_274345.1">
    <property type="nucleotide sequence ID" value="NC_003112.2"/>
</dbReference>
<dbReference type="SMR" id="Q9JZ26"/>
<dbReference type="FunCoup" id="Q9JZ26">
    <property type="interactions" value="203"/>
</dbReference>
<dbReference type="STRING" id="122586.NMB1326"/>
<dbReference type="PaxDb" id="122586-NMB1326"/>
<dbReference type="KEGG" id="nme:NMB1326"/>
<dbReference type="PATRIC" id="fig|122586.8.peg.1663"/>
<dbReference type="HOGENOM" id="CLU_014841_3_0_4"/>
<dbReference type="InParanoid" id="Q9JZ26"/>
<dbReference type="OrthoDB" id="9804933at2"/>
<dbReference type="Proteomes" id="UP000000425">
    <property type="component" value="Chromosome"/>
</dbReference>
<dbReference type="GO" id="GO:0005737">
    <property type="term" value="C:cytoplasm"/>
    <property type="evidence" value="ECO:0007669"/>
    <property type="project" value="UniProtKB-SubCell"/>
</dbReference>
<dbReference type="GO" id="GO:0009380">
    <property type="term" value="C:excinuclease repair complex"/>
    <property type="evidence" value="ECO:0000318"/>
    <property type="project" value="GO_Central"/>
</dbReference>
<dbReference type="GO" id="GO:0003677">
    <property type="term" value="F:DNA binding"/>
    <property type="evidence" value="ECO:0007669"/>
    <property type="project" value="UniProtKB-UniRule"/>
</dbReference>
<dbReference type="GO" id="GO:0009381">
    <property type="term" value="F:excinuclease ABC activity"/>
    <property type="evidence" value="ECO:0007669"/>
    <property type="project" value="UniProtKB-UniRule"/>
</dbReference>
<dbReference type="GO" id="GO:0006974">
    <property type="term" value="P:DNA damage response"/>
    <property type="evidence" value="ECO:0000318"/>
    <property type="project" value="GO_Central"/>
</dbReference>
<dbReference type="GO" id="GO:0006289">
    <property type="term" value="P:nucleotide-excision repair"/>
    <property type="evidence" value="ECO:0007669"/>
    <property type="project" value="UniProtKB-UniRule"/>
</dbReference>
<dbReference type="GO" id="GO:0009432">
    <property type="term" value="P:SOS response"/>
    <property type="evidence" value="ECO:0007669"/>
    <property type="project" value="UniProtKB-UniRule"/>
</dbReference>
<dbReference type="CDD" id="cd10434">
    <property type="entry name" value="GIY-YIG_UvrC_Cho"/>
    <property type="match status" value="1"/>
</dbReference>
<dbReference type="FunFam" id="1.10.150.20:FF:000005">
    <property type="entry name" value="UvrABC system protein C"/>
    <property type="match status" value="1"/>
</dbReference>
<dbReference type="FunFam" id="3.30.420.340:FF:000001">
    <property type="entry name" value="UvrABC system protein C"/>
    <property type="match status" value="1"/>
</dbReference>
<dbReference type="FunFam" id="3.40.1440.10:FF:000001">
    <property type="entry name" value="UvrABC system protein C"/>
    <property type="match status" value="1"/>
</dbReference>
<dbReference type="FunFam" id="4.10.860.10:FF:000002">
    <property type="entry name" value="UvrABC system protein C"/>
    <property type="match status" value="1"/>
</dbReference>
<dbReference type="Gene3D" id="1.10.150.20">
    <property type="entry name" value="5' to 3' exonuclease, C-terminal subdomain"/>
    <property type="match status" value="1"/>
</dbReference>
<dbReference type="Gene3D" id="3.40.1440.10">
    <property type="entry name" value="GIY-YIG endonuclease"/>
    <property type="match status" value="1"/>
</dbReference>
<dbReference type="Gene3D" id="4.10.860.10">
    <property type="entry name" value="UVR domain"/>
    <property type="match status" value="1"/>
</dbReference>
<dbReference type="Gene3D" id="3.30.420.340">
    <property type="entry name" value="UvrC, RNAse H endonuclease domain"/>
    <property type="match status" value="1"/>
</dbReference>
<dbReference type="HAMAP" id="MF_00203">
    <property type="entry name" value="UvrC"/>
    <property type="match status" value="1"/>
</dbReference>
<dbReference type="InterPro" id="IPR000305">
    <property type="entry name" value="GIY-YIG_endonuc"/>
</dbReference>
<dbReference type="InterPro" id="IPR035901">
    <property type="entry name" value="GIY-YIG_endonuc_sf"/>
</dbReference>
<dbReference type="InterPro" id="IPR047296">
    <property type="entry name" value="GIY-YIG_UvrC_Cho"/>
</dbReference>
<dbReference type="InterPro" id="IPR003583">
    <property type="entry name" value="Hlx-hairpin-Hlx_DNA-bd_motif"/>
</dbReference>
<dbReference type="InterPro" id="IPR010994">
    <property type="entry name" value="RuvA_2-like"/>
</dbReference>
<dbReference type="InterPro" id="IPR001943">
    <property type="entry name" value="UVR_dom"/>
</dbReference>
<dbReference type="InterPro" id="IPR036876">
    <property type="entry name" value="UVR_dom_sf"/>
</dbReference>
<dbReference type="InterPro" id="IPR050066">
    <property type="entry name" value="UvrABC_protein_C"/>
</dbReference>
<dbReference type="InterPro" id="IPR004791">
    <property type="entry name" value="UvrC"/>
</dbReference>
<dbReference type="InterPro" id="IPR001162">
    <property type="entry name" value="UvrC_RNase_H_dom"/>
</dbReference>
<dbReference type="InterPro" id="IPR038476">
    <property type="entry name" value="UvrC_RNase_H_dom_sf"/>
</dbReference>
<dbReference type="NCBIfam" id="NF001824">
    <property type="entry name" value="PRK00558.1-5"/>
    <property type="match status" value="1"/>
</dbReference>
<dbReference type="NCBIfam" id="TIGR00194">
    <property type="entry name" value="uvrC"/>
    <property type="match status" value="1"/>
</dbReference>
<dbReference type="PANTHER" id="PTHR30562:SF1">
    <property type="entry name" value="UVRABC SYSTEM PROTEIN C"/>
    <property type="match status" value="1"/>
</dbReference>
<dbReference type="PANTHER" id="PTHR30562">
    <property type="entry name" value="UVRC/OXIDOREDUCTASE"/>
    <property type="match status" value="1"/>
</dbReference>
<dbReference type="Pfam" id="PF01541">
    <property type="entry name" value="GIY-YIG"/>
    <property type="match status" value="1"/>
</dbReference>
<dbReference type="Pfam" id="PF14520">
    <property type="entry name" value="HHH_5"/>
    <property type="match status" value="1"/>
</dbReference>
<dbReference type="Pfam" id="PF02151">
    <property type="entry name" value="UVR"/>
    <property type="match status" value="1"/>
</dbReference>
<dbReference type="Pfam" id="PF22920">
    <property type="entry name" value="UvrC_RNaseH"/>
    <property type="match status" value="1"/>
</dbReference>
<dbReference type="Pfam" id="PF08459">
    <property type="entry name" value="UvrC_RNaseH_dom"/>
    <property type="match status" value="1"/>
</dbReference>
<dbReference type="SMART" id="SM00465">
    <property type="entry name" value="GIYc"/>
    <property type="match status" value="1"/>
</dbReference>
<dbReference type="SMART" id="SM00278">
    <property type="entry name" value="HhH1"/>
    <property type="match status" value="2"/>
</dbReference>
<dbReference type="SUPFAM" id="SSF46600">
    <property type="entry name" value="C-terminal UvrC-binding domain of UvrB"/>
    <property type="match status" value="1"/>
</dbReference>
<dbReference type="SUPFAM" id="SSF82771">
    <property type="entry name" value="GIY-YIG endonuclease"/>
    <property type="match status" value="1"/>
</dbReference>
<dbReference type="SUPFAM" id="SSF47781">
    <property type="entry name" value="RuvA domain 2-like"/>
    <property type="match status" value="1"/>
</dbReference>
<dbReference type="PROSITE" id="PS50164">
    <property type="entry name" value="GIY_YIG"/>
    <property type="match status" value="1"/>
</dbReference>
<dbReference type="PROSITE" id="PS50151">
    <property type="entry name" value="UVR"/>
    <property type="match status" value="1"/>
</dbReference>
<dbReference type="PROSITE" id="PS50165">
    <property type="entry name" value="UVRC"/>
    <property type="match status" value="1"/>
</dbReference>
<proteinExistence type="inferred from homology"/>
<reference key="1">
    <citation type="journal article" date="2000" name="Science">
        <title>Complete genome sequence of Neisseria meningitidis serogroup B strain MC58.</title>
        <authorList>
            <person name="Tettelin H."/>
            <person name="Saunders N.J."/>
            <person name="Heidelberg J.F."/>
            <person name="Jeffries A.C."/>
            <person name="Nelson K.E."/>
            <person name="Eisen J.A."/>
            <person name="Ketchum K.A."/>
            <person name="Hood D.W."/>
            <person name="Peden J.F."/>
            <person name="Dodson R.J."/>
            <person name="Nelson W.C."/>
            <person name="Gwinn M.L."/>
            <person name="DeBoy R.T."/>
            <person name="Peterson J.D."/>
            <person name="Hickey E.K."/>
            <person name="Haft D.H."/>
            <person name="Salzberg S.L."/>
            <person name="White O."/>
            <person name="Fleischmann R.D."/>
            <person name="Dougherty B.A."/>
            <person name="Mason T.M."/>
            <person name="Ciecko A."/>
            <person name="Parksey D.S."/>
            <person name="Blair E."/>
            <person name="Cittone H."/>
            <person name="Clark E.B."/>
            <person name="Cotton M.D."/>
            <person name="Utterback T.R."/>
            <person name="Khouri H.M."/>
            <person name="Qin H."/>
            <person name="Vamathevan J.J."/>
            <person name="Gill J."/>
            <person name="Scarlato V."/>
            <person name="Masignani V."/>
            <person name="Pizza M."/>
            <person name="Grandi G."/>
            <person name="Sun L."/>
            <person name="Smith H.O."/>
            <person name="Fraser C.M."/>
            <person name="Moxon E.R."/>
            <person name="Rappuoli R."/>
            <person name="Venter J.C."/>
        </authorList>
    </citation>
    <scope>NUCLEOTIDE SEQUENCE [LARGE SCALE GENOMIC DNA]</scope>
    <source>
        <strain>ATCC BAA-335 / MC58</strain>
    </source>
</reference>
<gene>
    <name evidence="1" type="primary">uvrC</name>
    <name type="ordered locus">NMB1326</name>
</gene>
<evidence type="ECO:0000255" key="1">
    <source>
        <dbReference type="HAMAP-Rule" id="MF_00203"/>
    </source>
</evidence>
<name>UVRC_NEIMB</name>
<accession>Q9JZ26</accession>
<protein>
    <recommendedName>
        <fullName evidence="1">UvrABC system protein C</fullName>
        <shortName evidence="1">Protein UvrC</shortName>
    </recommendedName>
    <alternativeName>
        <fullName evidence="1">Excinuclease ABC subunit C</fullName>
    </alternativeName>
</protein>
<comment type="function">
    <text evidence="1">The UvrABC repair system catalyzes the recognition and processing of DNA lesions. UvrC both incises the 5' and 3' sides of the lesion. The N-terminal half is responsible for the 3' incision and the C-terminal half is responsible for the 5' incision.</text>
</comment>
<comment type="subunit">
    <text evidence="1">Interacts with UvrB in an incision complex.</text>
</comment>
<comment type="subcellular location">
    <subcellularLocation>
        <location evidence="1">Cytoplasm</location>
    </subcellularLocation>
</comment>
<comment type="similarity">
    <text evidence="1">Belongs to the UvrC family.</text>
</comment>